<organism>
    <name type="scientific">Chlorobaculum parvum (strain DSM 263 / NCIMB 8327)</name>
    <name type="common">Chlorobium vibrioforme subsp. thiosulfatophilum</name>
    <dbReference type="NCBI Taxonomy" id="517417"/>
    <lineage>
        <taxon>Bacteria</taxon>
        <taxon>Pseudomonadati</taxon>
        <taxon>Chlorobiota</taxon>
        <taxon>Chlorobiia</taxon>
        <taxon>Chlorobiales</taxon>
        <taxon>Chlorobiaceae</taxon>
        <taxon>Chlorobaculum</taxon>
    </lineage>
</organism>
<evidence type="ECO:0000255" key="1">
    <source>
        <dbReference type="HAMAP-Rule" id="MF_00500"/>
    </source>
</evidence>
<evidence type="ECO:0000256" key="2">
    <source>
        <dbReference type="SAM" id="MobiDB-lite"/>
    </source>
</evidence>
<evidence type="ECO:0000305" key="3"/>
<keyword id="KW-0687">Ribonucleoprotein</keyword>
<keyword id="KW-0689">Ribosomal protein</keyword>
<keyword id="KW-0694">RNA-binding</keyword>
<keyword id="KW-0699">rRNA-binding</keyword>
<name>RS20_CHLP8</name>
<feature type="chain" id="PRO_1000126417" description="Small ribosomal subunit protein bS20">
    <location>
        <begin position="1"/>
        <end position="91"/>
    </location>
</feature>
<feature type="region of interest" description="Disordered" evidence="2">
    <location>
        <begin position="1"/>
        <end position="24"/>
    </location>
</feature>
<feature type="compositionally biased region" description="Basic and acidic residues" evidence="2">
    <location>
        <begin position="1"/>
        <end position="21"/>
    </location>
</feature>
<reference key="1">
    <citation type="submission" date="2008-06" db="EMBL/GenBank/DDBJ databases">
        <title>Complete sequence of Chlorobaculum parvum NCIB 8327.</title>
        <authorList>
            <consortium name="US DOE Joint Genome Institute"/>
            <person name="Lucas S."/>
            <person name="Copeland A."/>
            <person name="Lapidus A."/>
            <person name="Glavina del Rio T."/>
            <person name="Dalin E."/>
            <person name="Tice H."/>
            <person name="Bruce D."/>
            <person name="Goodwin L."/>
            <person name="Pitluck S."/>
            <person name="Schmutz J."/>
            <person name="Larimer F."/>
            <person name="Land M."/>
            <person name="Hauser L."/>
            <person name="Kyrpides N."/>
            <person name="Mikhailova N."/>
            <person name="Zhao F."/>
            <person name="Li T."/>
            <person name="Liu Z."/>
            <person name="Overmann J."/>
            <person name="Bryant D.A."/>
            <person name="Richardson P."/>
        </authorList>
    </citation>
    <scope>NUCLEOTIDE SEQUENCE [LARGE SCALE GENOMIC DNA]</scope>
    <source>
        <strain>DSM 263 / NCIMB 8327</strain>
    </source>
</reference>
<dbReference type="EMBL" id="CP001099">
    <property type="protein sequence ID" value="ACF12165.1"/>
    <property type="molecule type" value="Genomic_DNA"/>
</dbReference>
<dbReference type="RefSeq" id="WP_012502998.1">
    <property type="nucleotide sequence ID" value="NC_011027.1"/>
</dbReference>
<dbReference type="SMR" id="B3QQG2"/>
<dbReference type="STRING" id="517417.Cpar_1773"/>
<dbReference type="KEGG" id="cpc:Cpar_1773"/>
<dbReference type="eggNOG" id="COG0268">
    <property type="taxonomic scope" value="Bacteria"/>
</dbReference>
<dbReference type="HOGENOM" id="CLU_160655_3_1_10"/>
<dbReference type="OrthoDB" id="9808392at2"/>
<dbReference type="Proteomes" id="UP000008811">
    <property type="component" value="Chromosome"/>
</dbReference>
<dbReference type="GO" id="GO:0005829">
    <property type="term" value="C:cytosol"/>
    <property type="evidence" value="ECO:0007669"/>
    <property type="project" value="TreeGrafter"/>
</dbReference>
<dbReference type="GO" id="GO:0015935">
    <property type="term" value="C:small ribosomal subunit"/>
    <property type="evidence" value="ECO:0007669"/>
    <property type="project" value="TreeGrafter"/>
</dbReference>
<dbReference type="GO" id="GO:0070181">
    <property type="term" value="F:small ribosomal subunit rRNA binding"/>
    <property type="evidence" value="ECO:0007669"/>
    <property type="project" value="TreeGrafter"/>
</dbReference>
<dbReference type="GO" id="GO:0003735">
    <property type="term" value="F:structural constituent of ribosome"/>
    <property type="evidence" value="ECO:0007669"/>
    <property type="project" value="InterPro"/>
</dbReference>
<dbReference type="GO" id="GO:0006412">
    <property type="term" value="P:translation"/>
    <property type="evidence" value="ECO:0007669"/>
    <property type="project" value="UniProtKB-UniRule"/>
</dbReference>
<dbReference type="Gene3D" id="1.20.58.110">
    <property type="entry name" value="Ribosomal protein S20"/>
    <property type="match status" value="1"/>
</dbReference>
<dbReference type="HAMAP" id="MF_00500">
    <property type="entry name" value="Ribosomal_bS20"/>
    <property type="match status" value="1"/>
</dbReference>
<dbReference type="InterPro" id="IPR002583">
    <property type="entry name" value="Ribosomal_bS20"/>
</dbReference>
<dbReference type="InterPro" id="IPR036510">
    <property type="entry name" value="Ribosomal_bS20_sf"/>
</dbReference>
<dbReference type="NCBIfam" id="TIGR00029">
    <property type="entry name" value="S20"/>
    <property type="match status" value="1"/>
</dbReference>
<dbReference type="PANTHER" id="PTHR33398">
    <property type="entry name" value="30S RIBOSOMAL PROTEIN S20"/>
    <property type="match status" value="1"/>
</dbReference>
<dbReference type="PANTHER" id="PTHR33398:SF1">
    <property type="entry name" value="SMALL RIBOSOMAL SUBUNIT PROTEIN BS20C"/>
    <property type="match status" value="1"/>
</dbReference>
<dbReference type="Pfam" id="PF01649">
    <property type="entry name" value="Ribosomal_S20p"/>
    <property type="match status" value="1"/>
</dbReference>
<dbReference type="SUPFAM" id="SSF46992">
    <property type="entry name" value="Ribosomal protein S20"/>
    <property type="match status" value="1"/>
</dbReference>
<gene>
    <name evidence="1" type="primary">rpsT</name>
    <name type="ordered locus">Cpar_1773</name>
</gene>
<protein>
    <recommendedName>
        <fullName evidence="1">Small ribosomal subunit protein bS20</fullName>
    </recommendedName>
    <alternativeName>
        <fullName evidence="3">30S ribosomal protein S20</fullName>
    </alternativeName>
</protein>
<comment type="function">
    <text evidence="1">Binds directly to 16S ribosomal RNA.</text>
</comment>
<comment type="similarity">
    <text evidence="1">Belongs to the bacterial ribosomal protein bS20 family.</text>
</comment>
<accession>B3QQG2</accession>
<sequence length="91" mass="10485">MPLHKSAEKRLRQAARRNERNRARKKELKGLLKNMQKLIDANAAKSEVESAYRAAVQKLDRLGVKRYIHANKASRKKAQLTKMLNSYTPQA</sequence>
<proteinExistence type="inferred from homology"/>